<proteinExistence type="inferred from homology"/>
<accession>Q65SA3</accession>
<organism>
    <name type="scientific">Mannheimia succiniciproducens (strain KCTC 0769BP / MBEL55E)</name>
    <dbReference type="NCBI Taxonomy" id="221988"/>
    <lineage>
        <taxon>Bacteria</taxon>
        <taxon>Pseudomonadati</taxon>
        <taxon>Pseudomonadota</taxon>
        <taxon>Gammaproteobacteria</taxon>
        <taxon>Pasteurellales</taxon>
        <taxon>Pasteurellaceae</taxon>
        <taxon>Basfia</taxon>
    </lineage>
</organism>
<keyword id="KW-0031">Aminopeptidase</keyword>
<keyword id="KW-0963">Cytoplasm</keyword>
<keyword id="KW-0378">Hydrolase</keyword>
<keyword id="KW-0464">Manganese</keyword>
<keyword id="KW-0479">Metal-binding</keyword>
<keyword id="KW-0645">Protease</keyword>
<comment type="function">
    <text evidence="1">Presumably involved in the processing and regular turnover of intracellular proteins. Catalyzes the removal of unsubstituted N-terminal amino acids from various peptides.</text>
</comment>
<comment type="catalytic activity">
    <reaction evidence="1">
        <text>Release of an N-terminal amino acid, Xaa-|-Yaa-, in which Xaa is preferably Leu, but may be other amino acids including Pro although not Arg or Lys, and Yaa may be Pro. Amino acid amides and methyl esters are also readily hydrolyzed, but rates on arylamides are exceedingly low.</text>
        <dbReference type="EC" id="3.4.11.1"/>
    </reaction>
</comment>
<comment type="catalytic activity">
    <reaction evidence="1">
        <text>Release of an N-terminal amino acid, preferentially leucine, but not glutamic or aspartic acids.</text>
        <dbReference type="EC" id="3.4.11.10"/>
    </reaction>
</comment>
<comment type="cofactor">
    <cofactor evidence="1">
        <name>Mn(2+)</name>
        <dbReference type="ChEBI" id="CHEBI:29035"/>
    </cofactor>
    <text evidence="1">Binds 2 manganese ions per subunit.</text>
</comment>
<comment type="subcellular location">
    <subcellularLocation>
        <location evidence="1">Cytoplasm</location>
    </subcellularLocation>
</comment>
<comment type="similarity">
    <text evidence="1">Belongs to the peptidase M17 family.</text>
</comment>
<evidence type="ECO:0000255" key="1">
    <source>
        <dbReference type="HAMAP-Rule" id="MF_00181"/>
    </source>
</evidence>
<sequence>MKYSVKQTALEQENKSLFIAIFENQELSPAALKLDLKLKGEITEAVKNGEVSGKIGRILVLRHGAQRIILVGCGKQNEVTERQYKQIIQKAVKTAKETIATTIINALTEVKIKDRDLYWNVRFAVETIEEDNYIFEQFKSKKSENNSKLAEIIFYTEENHEQAELAIRHATAISSGVKAAKDIANCPPNICNPAYLAEQANQLAGRSSLIETTVIGEKEMRKLGMNAYLAVSCGSKNEAKLSVMEYRNHENPNAKPIVLAGKGLTFDAGGISLKPAADMDEMKYDMCGAASVYGVMNAIAELQLPLNVIGVMAGCENLPDGNAYRPGDILTTMSGLTVEVLNTDAEGRLVLCDTLTYVERFEPELVIDVATLTGACVVALGQHNSGLVSTDDNLAQDLERAAKLANDKAWRLPLSEEYQEQLKSKFADLANLGGRWGGAITAGAFLSNFTKNYPWAHLDIAGTAWLQGQNKGATGRPVSLLVQFLLNQVK</sequence>
<name>AMPA_MANSM</name>
<reference key="1">
    <citation type="journal article" date="2004" name="Nat. Biotechnol.">
        <title>The genome sequence of the capnophilic rumen bacterium Mannheimia succiniciproducens.</title>
        <authorList>
            <person name="Hong S.H."/>
            <person name="Kim J.S."/>
            <person name="Lee S.Y."/>
            <person name="In Y.H."/>
            <person name="Choi S.S."/>
            <person name="Rih J.-K."/>
            <person name="Kim C.H."/>
            <person name="Jeong H."/>
            <person name="Hur C.G."/>
            <person name="Kim J.J."/>
        </authorList>
    </citation>
    <scope>NUCLEOTIDE SEQUENCE [LARGE SCALE GENOMIC DNA]</scope>
    <source>
        <strain>KCTC 0769BP / MBEL55E</strain>
    </source>
</reference>
<dbReference type="EC" id="3.4.11.1" evidence="1"/>
<dbReference type="EC" id="3.4.11.10" evidence="1"/>
<dbReference type="EMBL" id="AE016827">
    <property type="protein sequence ID" value="AAU38157.1"/>
    <property type="molecule type" value="Genomic_DNA"/>
</dbReference>
<dbReference type="RefSeq" id="WP_011200722.1">
    <property type="nucleotide sequence ID" value="NC_006300.1"/>
</dbReference>
<dbReference type="SMR" id="Q65SA3"/>
<dbReference type="STRING" id="221988.MS1550"/>
<dbReference type="MEROPS" id="M17.003"/>
<dbReference type="KEGG" id="msu:MS1550"/>
<dbReference type="eggNOG" id="COG0260">
    <property type="taxonomic scope" value="Bacteria"/>
</dbReference>
<dbReference type="HOGENOM" id="CLU_013734_0_1_6"/>
<dbReference type="OrthoDB" id="9809354at2"/>
<dbReference type="Proteomes" id="UP000000607">
    <property type="component" value="Chromosome"/>
</dbReference>
<dbReference type="GO" id="GO:0005737">
    <property type="term" value="C:cytoplasm"/>
    <property type="evidence" value="ECO:0007669"/>
    <property type="project" value="UniProtKB-SubCell"/>
</dbReference>
<dbReference type="GO" id="GO:0030145">
    <property type="term" value="F:manganese ion binding"/>
    <property type="evidence" value="ECO:0007669"/>
    <property type="project" value="UniProtKB-UniRule"/>
</dbReference>
<dbReference type="GO" id="GO:0070006">
    <property type="term" value="F:metalloaminopeptidase activity"/>
    <property type="evidence" value="ECO:0007669"/>
    <property type="project" value="InterPro"/>
</dbReference>
<dbReference type="GO" id="GO:0006508">
    <property type="term" value="P:proteolysis"/>
    <property type="evidence" value="ECO:0007669"/>
    <property type="project" value="UniProtKB-KW"/>
</dbReference>
<dbReference type="CDD" id="cd00433">
    <property type="entry name" value="Peptidase_M17"/>
    <property type="match status" value="1"/>
</dbReference>
<dbReference type="FunFam" id="3.40.630.10:FF:000004">
    <property type="entry name" value="Probable cytosol aminopeptidase"/>
    <property type="match status" value="1"/>
</dbReference>
<dbReference type="Gene3D" id="3.40.220.10">
    <property type="entry name" value="Leucine Aminopeptidase, subunit E, domain 1"/>
    <property type="match status" value="1"/>
</dbReference>
<dbReference type="Gene3D" id="3.40.630.10">
    <property type="entry name" value="Zn peptidases"/>
    <property type="match status" value="1"/>
</dbReference>
<dbReference type="HAMAP" id="MF_00181">
    <property type="entry name" value="Cytosol_peptidase_M17"/>
    <property type="match status" value="1"/>
</dbReference>
<dbReference type="InterPro" id="IPR011356">
    <property type="entry name" value="Leucine_aapep/pepB"/>
</dbReference>
<dbReference type="InterPro" id="IPR043472">
    <property type="entry name" value="Macro_dom-like"/>
</dbReference>
<dbReference type="InterPro" id="IPR000819">
    <property type="entry name" value="Peptidase_M17_C"/>
</dbReference>
<dbReference type="InterPro" id="IPR023042">
    <property type="entry name" value="Peptidase_M17_leu_NH2_pept"/>
</dbReference>
<dbReference type="InterPro" id="IPR008283">
    <property type="entry name" value="Peptidase_M17_N"/>
</dbReference>
<dbReference type="NCBIfam" id="NF002073">
    <property type="entry name" value="PRK00913.1-2"/>
    <property type="match status" value="1"/>
</dbReference>
<dbReference type="NCBIfam" id="NF002074">
    <property type="entry name" value="PRK00913.1-4"/>
    <property type="match status" value="1"/>
</dbReference>
<dbReference type="PANTHER" id="PTHR11963:SF23">
    <property type="entry name" value="CYTOSOL AMINOPEPTIDASE"/>
    <property type="match status" value="1"/>
</dbReference>
<dbReference type="PANTHER" id="PTHR11963">
    <property type="entry name" value="LEUCINE AMINOPEPTIDASE-RELATED"/>
    <property type="match status" value="1"/>
</dbReference>
<dbReference type="Pfam" id="PF00883">
    <property type="entry name" value="Peptidase_M17"/>
    <property type="match status" value="1"/>
</dbReference>
<dbReference type="Pfam" id="PF02789">
    <property type="entry name" value="Peptidase_M17_N"/>
    <property type="match status" value="1"/>
</dbReference>
<dbReference type="PRINTS" id="PR00481">
    <property type="entry name" value="LAMNOPPTDASE"/>
</dbReference>
<dbReference type="SUPFAM" id="SSF52949">
    <property type="entry name" value="Macro domain-like"/>
    <property type="match status" value="1"/>
</dbReference>
<dbReference type="SUPFAM" id="SSF53187">
    <property type="entry name" value="Zn-dependent exopeptidases"/>
    <property type="match status" value="1"/>
</dbReference>
<dbReference type="PROSITE" id="PS00631">
    <property type="entry name" value="CYTOSOL_AP"/>
    <property type="match status" value="1"/>
</dbReference>
<feature type="chain" id="PRO_1000019932" description="Probable cytosol aminopeptidase">
    <location>
        <begin position="1"/>
        <end position="490"/>
    </location>
</feature>
<feature type="active site" evidence="1">
    <location>
        <position position="274"/>
    </location>
</feature>
<feature type="active site" evidence="1">
    <location>
        <position position="348"/>
    </location>
</feature>
<feature type="binding site" evidence="1">
    <location>
        <position position="262"/>
    </location>
    <ligand>
        <name>Mn(2+)</name>
        <dbReference type="ChEBI" id="CHEBI:29035"/>
        <label>2</label>
    </ligand>
</feature>
<feature type="binding site" evidence="1">
    <location>
        <position position="267"/>
    </location>
    <ligand>
        <name>Mn(2+)</name>
        <dbReference type="ChEBI" id="CHEBI:29035"/>
        <label>1</label>
    </ligand>
</feature>
<feature type="binding site" evidence="1">
    <location>
        <position position="267"/>
    </location>
    <ligand>
        <name>Mn(2+)</name>
        <dbReference type="ChEBI" id="CHEBI:29035"/>
        <label>2</label>
    </ligand>
</feature>
<feature type="binding site" evidence="1">
    <location>
        <position position="285"/>
    </location>
    <ligand>
        <name>Mn(2+)</name>
        <dbReference type="ChEBI" id="CHEBI:29035"/>
        <label>2</label>
    </ligand>
</feature>
<feature type="binding site" evidence="1">
    <location>
        <position position="344"/>
    </location>
    <ligand>
        <name>Mn(2+)</name>
        <dbReference type="ChEBI" id="CHEBI:29035"/>
        <label>1</label>
    </ligand>
</feature>
<feature type="binding site" evidence="1">
    <location>
        <position position="346"/>
    </location>
    <ligand>
        <name>Mn(2+)</name>
        <dbReference type="ChEBI" id="CHEBI:29035"/>
        <label>1</label>
    </ligand>
</feature>
<feature type="binding site" evidence="1">
    <location>
        <position position="346"/>
    </location>
    <ligand>
        <name>Mn(2+)</name>
        <dbReference type="ChEBI" id="CHEBI:29035"/>
        <label>2</label>
    </ligand>
</feature>
<protein>
    <recommendedName>
        <fullName evidence="1">Probable cytosol aminopeptidase</fullName>
        <ecNumber evidence="1">3.4.11.1</ecNumber>
    </recommendedName>
    <alternativeName>
        <fullName evidence="1">Leucine aminopeptidase</fullName>
        <shortName evidence="1">LAP</shortName>
        <ecNumber evidence="1">3.4.11.10</ecNumber>
    </alternativeName>
    <alternativeName>
        <fullName evidence="1">Leucyl aminopeptidase</fullName>
    </alternativeName>
</protein>
<gene>
    <name evidence="1" type="primary">pepA</name>
    <name type="ordered locus">MS1550</name>
</gene>